<feature type="chain" id="PRO_0000397607" description="rRNA biogenesis protein RRP36">
    <location>
        <begin position="1"/>
        <end position="345"/>
    </location>
</feature>
<feature type="region of interest" description="Disordered" evidence="3">
    <location>
        <begin position="16"/>
        <end position="71"/>
    </location>
</feature>
<feature type="region of interest" description="Disordered" evidence="3">
    <location>
        <begin position="85"/>
        <end position="167"/>
    </location>
</feature>
<feature type="region of interest" description="Disordered" evidence="3">
    <location>
        <begin position="312"/>
        <end position="345"/>
    </location>
</feature>
<feature type="coiled-coil region" evidence="2">
    <location>
        <begin position="219"/>
        <end position="267"/>
    </location>
</feature>
<feature type="compositionally biased region" description="Basic and acidic residues" evidence="3">
    <location>
        <begin position="16"/>
        <end position="25"/>
    </location>
</feature>
<feature type="compositionally biased region" description="Acidic residues" evidence="3">
    <location>
        <begin position="32"/>
        <end position="59"/>
    </location>
</feature>
<feature type="compositionally biased region" description="Polar residues" evidence="3">
    <location>
        <begin position="108"/>
        <end position="119"/>
    </location>
</feature>
<feature type="compositionally biased region" description="Basic residues" evidence="3">
    <location>
        <begin position="143"/>
        <end position="153"/>
    </location>
</feature>
<feature type="compositionally biased region" description="Basic and acidic residues" evidence="3">
    <location>
        <begin position="312"/>
        <end position="322"/>
    </location>
</feature>
<feature type="compositionally biased region" description="Basic and acidic residues" evidence="3">
    <location>
        <begin position="330"/>
        <end position="345"/>
    </location>
</feature>
<dbReference type="EMBL" id="GG663379">
    <property type="protein sequence ID" value="EEH03044.1"/>
    <property type="molecule type" value="Genomic_DNA"/>
</dbReference>
<dbReference type="SMR" id="C0NZV4"/>
<dbReference type="FunCoup" id="C0NZV4">
    <property type="interactions" value="512"/>
</dbReference>
<dbReference type="STRING" id="447093.C0NZV4"/>
<dbReference type="VEuPathDB" id="FungiDB:I7I50_09208"/>
<dbReference type="HOGENOM" id="CLU_048802_0_0_1"/>
<dbReference type="InParanoid" id="C0NZV4"/>
<dbReference type="Proteomes" id="UP000001631">
    <property type="component" value="Unassembled WGS sequence"/>
</dbReference>
<dbReference type="GO" id="GO:0030686">
    <property type="term" value="C:90S preribosome"/>
    <property type="evidence" value="ECO:0007669"/>
    <property type="project" value="TreeGrafter"/>
</dbReference>
<dbReference type="GO" id="GO:0005730">
    <property type="term" value="C:nucleolus"/>
    <property type="evidence" value="ECO:0007669"/>
    <property type="project" value="UniProtKB-SubCell"/>
</dbReference>
<dbReference type="GO" id="GO:0000462">
    <property type="term" value="P:maturation of SSU-rRNA from tricistronic rRNA transcript (SSU-rRNA, 5.8S rRNA, LSU-rRNA)"/>
    <property type="evidence" value="ECO:0007669"/>
    <property type="project" value="TreeGrafter"/>
</dbReference>
<dbReference type="InterPro" id="IPR009292">
    <property type="entry name" value="RRP36"/>
</dbReference>
<dbReference type="PANTHER" id="PTHR21738">
    <property type="entry name" value="RIBOSOMAL RNA PROCESSING PROTEIN 36 HOMOLOG"/>
    <property type="match status" value="1"/>
</dbReference>
<dbReference type="PANTHER" id="PTHR21738:SF0">
    <property type="entry name" value="RIBOSOMAL RNA PROCESSING PROTEIN 36 HOMOLOG"/>
    <property type="match status" value="1"/>
</dbReference>
<dbReference type="Pfam" id="PF06102">
    <property type="entry name" value="RRP36"/>
    <property type="match status" value="1"/>
</dbReference>
<sequence>MPISSTLNQRVRARLENDGFEHFSDESVSNEALDEGESNEDTEQDNSDQRETDDDDTEDDGHTEISDINPSLNTISFGALAKAQAALGKRKRRTTSTTDITPKRTKVLSRQSPTPSTSSNKEHDQCQGLSEFQKHLASNAKKPPQKLTHRTSKHAPTIQSSRHAVSRKRTILEPLAVPKPRDPRFDSVVLSHSTNGDPSTAANADIHARNNYAFLNHYRTDEIAELRKQVSALQTKKKKTERDDHEIVRLKREITSMSDRQRAFERKEMEREVLVQHRRREKELIREGKKSQPYFLKKGEVKREVIAKRFTEMSGKEKQRALERRRKKVAGKERKEMPWGRRGVE</sequence>
<proteinExistence type="inferred from homology"/>
<reference key="1">
    <citation type="submission" date="2009-02" db="EMBL/GenBank/DDBJ databases">
        <title>The genome sequence of Ajellomyces capsulatus strain G186AR.</title>
        <authorList>
            <person name="Champion M."/>
            <person name="Cuomo C.A."/>
            <person name="Ma L.-J."/>
            <person name="Henn M.R."/>
            <person name="Sil A."/>
            <person name="Goldman B."/>
            <person name="Young S.K."/>
            <person name="Kodira C.D."/>
            <person name="Zeng Q."/>
            <person name="Koehrsen M."/>
            <person name="Alvarado L."/>
            <person name="Berlin A."/>
            <person name="Borenstein D."/>
            <person name="Chen Z."/>
            <person name="Engels R."/>
            <person name="Freedman E."/>
            <person name="Gellesch M."/>
            <person name="Goldberg J."/>
            <person name="Griggs A."/>
            <person name="Gujja S."/>
            <person name="Heiman D."/>
            <person name="Hepburn T."/>
            <person name="Howarth C."/>
            <person name="Jen D."/>
            <person name="Larson L."/>
            <person name="Lewis B."/>
            <person name="Mehta T."/>
            <person name="Park D."/>
            <person name="Pearson M."/>
            <person name="Roberts A."/>
            <person name="Saif S."/>
            <person name="Shea T."/>
            <person name="Shenoy N."/>
            <person name="Sisk P."/>
            <person name="Stolte C."/>
            <person name="Sykes S."/>
            <person name="Walk T."/>
            <person name="White J."/>
            <person name="Yandava C."/>
            <person name="Klein B."/>
            <person name="McEwen J.G."/>
            <person name="Puccia R."/>
            <person name="Goldman G.H."/>
            <person name="Felipe M.S."/>
            <person name="Nino-Vega G."/>
            <person name="San-Blas G."/>
            <person name="Taylor J."/>
            <person name="Mendoza L."/>
            <person name="Galagan J.E."/>
            <person name="Nusbaum C."/>
            <person name="Birren B.W."/>
        </authorList>
    </citation>
    <scope>NUCLEOTIDE SEQUENCE [LARGE SCALE GENOMIC DNA]</scope>
    <source>
        <strain>G186AR / H82 / ATCC MYA-2454 / RMSCC 2432</strain>
    </source>
</reference>
<organism>
    <name type="scientific">Ajellomyces capsulatus (strain G186AR / H82 / ATCC MYA-2454 / RMSCC 2432)</name>
    <name type="common">Darling's disease fungus</name>
    <name type="synonym">Histoplasma capsulatum</name>
    <dbReference type="NCBI Taxonomy" id="447093"/>
    <lineage>
        <taxon>Eukaryota</taxon>
        <taxon>Fungi</taxon>
        <taxon>Dikarya</taxon>
        <taxon>Ascomycota</taxon>
        <taxon>Pezizomycotina</taxon>
        <taxon>Eurotiomycetes</taxon>
        <taxon>Eurotiomycetidae</taxon>
        <taxon>Onygenales</taxon>
        <taxon>Ajellomycetaceae</taxon>
        <taxon>Histoplasma</taxon>
    </lineage>
</organism>
<accession>C0NZV4</accession>
<evidence type="ECO:0000250" key="1"/>
<evidence type="ECO:0000255" key="2"/>
<evidence type="ECO:0000256" key="3">
    <source>
        <dbReference type="SAM" id="MobiDB-lite"/>
    </source>
</evidence>
<evidence type="ECO:0000305" key="4"/>
<gene>
    <name type="primary">RRP36</name>
    <name type="ORF">HCBG_08685</name>
</gene>
<name>RRP36_AJECG</name>
<comment type="function">
    <text evidence="1">Component of the 90S pre-ribosome involved in the maturation of rRNAs. Required for early cleavages of the pre-RNAs in the 40S ribosomal subunit maturation pathway (By similarity).</text>
</comment>
<comment type="subunit">
    <text evidence="1">Associates with 90S and pre-40S pre-ribosomal particles.</text>
</comment>
<comment type="subcellular location">
    <subcellularLocation>
        <location evidence="1">Nucleus</location>
        <location evidence="1">Nucleolus</location>
    </subcellularLocation>
</comment>
<comment type="similarity">
    <text evidence="4">Belongs to the RRP36 family.</text>
</comment>
<protein>
    <recommendedName>
        <fullName>rRNA biogenesis protein RRP36</fullName>
    </recommendedName>
    <alternativeName>
        <fullName>Ribosomal RNA-processing protein 36</fullName>
    </alternativeName>
</protein>
<keyword id="KW-0175">Coiled coil</keyword>
<keyword id="KW-0539">Nucleus</keyword>
<keyword id="KW-1185">Reference proteome</keyword>
<keyword id="KW-0687">Ribonucleoprotein</keyword>
<keyword id="KW-0690">Ribosome biogenesis</keyword>
<keyword id="KW-0698">rRNA processing</keyword>